<evidence type="ECO:0000255" key="1">
    <source>
        <dbReference type="HAMAP-Rule" id="MF_00115"/>
    </source>
</evidence>
<accession>Q0HQW4</accession>
<proteinExistence type="inferred from homology"/>
<comment type="function">
    <text evidence="1">Channel that opens in response to stretch forces in the membrane lipid bilayer. May participate in the regulation of osmotic pressure changes within the cell.</text>
</comment>
<comment type="subunit">
    <text evidence="1">Homopentamer.</text>
</comment>
<comment type="subcellular location">
    <subcellularLocation>
        <location evidence="1">Cell inner membrane</location>
        <topology evidence="1">Multi-pass membrane protein</topology>
    </subcellularLocation>
</comment>
<comment type="similarity">
    <text evidence="1">Belongs to the MscL family.</text>
</comment>
<protein>
    <recommendedName>
        <fullName evidence="1">Large-conductance mechanosensitive channel</fullName>
    </recommendedName>
</protein>
<feature type="chain" id="PRO_1000015428" description="Large-conductance mechanosensitive channel">
    <location>
        <begin position="1"/>
        <end position="136"/>
    </location>
</feature>
<feature type="transmembrane region" description="Helical" evidence="1">
    <location>
        <begin position="9"/>
        <end position="29"/>
    </location>
</feature>
<feature type="transmembrane region" description="Helical" evidence="1">
    <location>
        <begin position="79"/>
        <end position="99"/>
    </location>
</feature>
<name>MSCL_SHESR</name>
<dbReference type="EMBL" id="CP000444">
    <property type="protein sequence ID" value="ABI44491.1"/>
    <property type="molecule type" value="Genomic_DNA"/>
</dbReference>
<dbReference type="SMR" id="Q0HQW4"/>
<dbReference type="KEGG" id="shm:Shewmr7_3511"/>
<dbReference type="HOGENOM" id="CLU_095787_0_0_6"/>
<dbReference type="GO" id="GO:0005886">
    <property type="term" value="C:plasma membrane"/>
    <property type="evidence" value="ECO:0007669"/>
    <property type="project" value="UniProtKB-SubCell"/>
</dbReference>
<dbReference type="GO" id="GO:0008381">
    <property type="term" value="F:mechanosensitive monoatomic ion channel activity"/>
    <property type="evidence" value="ECO:0007669"/>
    <property type="project" value="UniProtKB-UniRule"/>
</dbReference>
<dbReference type="FunFam" id="1.10.1200.120:FF:000001">
    <property type="entry name" value="Large-conductance mechanosensitive channel"/>
    <property type="match status" value="1"/>
</dbReference>
<dbReference type="Gene3D" id="1.10.1200.120">
    <property type="entry name" value="Large-conductance mechanosensitive channel, MscL, domain 1"/>
    <property type="match status" value="1"/>
</dbReference>
<dbReference type="HAMAP" id="MF_00115">
    <property type="entry name" value="MscL"/>
    <property type="match status" value="1"/>
</dbReference>
<dbReference type="InterPro" id="IPR019823">
    <property type="entry name" value="Mechanosensitive_channel_CS"/>
</dbReference>
<dbReference type="InterPro" id="IPR001185">
    <property type="entry name" value="MS_channel"/>
</dbReference>
<dbReference type="InterPro" id="IPR037673">
    <property type="entry name" value="MSC/AndL"/>
</dbReference>
<dbReference type="InterPro" id="IPR036019">
    <property type="entry name" value="MscL_channel"/>
</dbReference>
<dbReference type="NCBIfam" id="TIGR00220">
    <property type="entry name" value="mscL"/>
    <property type="match status" value="1"/>
</dbReference>
<dbReference type="NCBIfam" id="NF001843">
    <property type="entry name" value="PRK00567.1-4"/>
    <property type="match status" value="1"/>
</dbReference>
<dbReference type="PANTHER" id="PTHR30266:SF2">
    <property type="entry name" value="LARGE-CONDUCTANCE MECHANOSENSITIVE CHANNEL"/>
    <property type="match status" value="1"/>
</dbReference>
<dbReference type="PANTHER" id="PTHR30266">
    <property type="entry name" value="MECHANOSENSITIVE CHANNEL MSCL"/>
    <property type="match status" value="1"/>
</dbReference>
<dbReference type="Pfam" id="PF01741">
    <property type="entry name" value="MscL"/>
    <property type="match status" value="1"/>
</dbReference>
<dbReference type="PRINTS" id="PR01264">
    <property type="entry name" value="MECHCHANNEL"/>
</dbReference>
<dbReference type="SUPFAM" id="SSF81330">
    <property type="entry name" value="Gated mechanosensitive channel"/>
    <property type="match status" value="1"/>
</dbReference>
<dbReference type="PROSITE" id="PS01327">
    <property type="entry name" value="MSCL"/>
    <property type="match status" value="1"/>
</dbReference>
<keyword id="KW-0997">Cell inner membrane</keyword>
<keyword id="KW-1003">Cell membrane</keyword>
<keyword id="KW-0407">Ion channel</keyword>
<keyword id="KW-0406">Ion transport</keyword>
<keyword id="KW-0472">Membrane</keyword>
<keyword id="KW-0812">Transmembrane</keyword>
<keyword id="KW-1133">Transmembrane helix</keyword>
<keyword id="KW-0813">Transport</keyword>
<reference key="1">
    <citation type="submission" date="2006-08" db="EMBL/GenBank/DDBJ databases">
        <title>Complete sequence of chromosome 1 of Shewanella sp. MR-7.</title>
        <authorList>
            <person name="Copeland A."/>
            <person name="Lucas S."/>
            <person name="Lapidus A."/>
            <person name="Barry K."/>
            <person name="Detter J.C."/>
            <person name="Glavina del Rio T."/>
            <person name="Hammon N."/>
            <person name="Israni S."/>
            <person name="Dalin E."/>
            <person name="Tice H."/>
            <person name="Pitluck S."/>
            <person name="Kiss H."/>
            <person name="Brettin T."/>
            <person name="Bruce D."/>
            <person name="Han C."/>
            <person name="Tapia R."/>
            <person name="Gilna P."/>
            <person name="Schmutz J."/>
            <person name="Larimer F."/>
            <person name="Land M."/>
            <person name="Hauser L."/>
            <person name="Kyrpides N."/>
            <person name="Mikhailova N."/>
            <person name="Nealson K."/>
            <person name="Konstantinidis K."/>
            <person name="Klappenbach J."/>
            <person name="Tiedje J."/>
            <person name="Richardson P."/>
        </authorList>
    </citation>
    <scope>NUCLEOTIDE SEQUENCE [LARGE SCALE GENOMIC DNA]</scope>
    <source>
        <strain>MR-7</strain>
    </source>
</reference>
<sequence length="136" mass="14545">MSLIKEFKAFASRGNVIDMAVGIIIGAAFGKIVSSFVADIIMPPIGIILGGVNFSDLSIVLQAAQGDAPAVVIAYGKFIQTVIDFTIIAFAIFMGLKAINSLKRKQEEAPKAPPAPTKDQELLSEIRDLLKAQQEK</sequence>
<organism>
    <name type="scientific">Shewanella sp. (strain MR-7)</name>
    <dbReference type="NCBI Taxonomy" id="60481"/>
    <lineage>
        <taxon>Bacteria</taxon>
        <taxon>Pseudomonadati</taxon>
        <taxon>Pseudomonadota</taxon>
        <taxon>Gammaproteobacteria</taxon>
        <taxon>Alteromonadales</taxon>
        <taxon>Shewanellaceae</taxon>
        <taxon>Shewanella</taxon>
    </lineage>
</organism>
<gene>
    <name evidence="1" type="primary">mscL</name>
    <name type="ordered locus">Shewmr7_3511</name>
</gene>